<proteinExistence type="inferred from homology"/>
<sequence length="282" mass="32682">MASKRWCFTLNYKTALERETFISLFSRDELNYFVCGDEIAPTTGQKHLQGYVSMKKLIRLGGLKKKFGSIAHWEIAKGDDFQNRDYCTKETLIAEIGAPVKKGSNRRKIMEIYEEDPEEMKLRDPDTALRCKAKKLREEYCSEVSVFSLRPWQIELHRALMEVPDDRTIIWAYGPDGGEGKSTFAKELIKYGWFYTAGGKTQDILYMYAQDPERNIAFDVPRCSSEMMNYQAMEMMKNRVFASTKYRPVDLCIRKKVHLIVFANVAPDPTKLSEDRIVIINC</sequence>
<dbReference type="EC" id="2.7.7.-"/>
<dbReference type="EC" id="3.1.21.-"/>
<dbReference type="EC" id="3.6.1.-"/>
<dbReference type="EMBL" id="AB000921">
    <property type="protein sequence ID" value="BAA33981.1"/>
    <property type="molecule type" value="Genomic_DNA"/>
</dbReference>
<dbReference type="RefSeq" id="NP_619760.1">
    <property type="nucleotide sequence ID" value="NC_003639.1"/>
</dbReference>
<dbReference type="SMR" id="Q9Z0D4"/>
<dbReference type="KEGG" id="vg:18479556"/>
<dbReference type="Proteomes" id="UP001508044">
    <property type="component" value="Genome"/>
</dbReference>
<dbReference type="GO" id="GO:0042025">
    <property type="term" value="C:host cell nucleus"/>
    <property type="evidence" value="ECO:0007669"/>
    <property type="project" value="UniProtKB-SubCell"/>
</dbReference>
<dbReference type="GO" id="GO:0005524">
    <property type="term" value="F:ATP binding"/>
    <property type="evidence" value="ECO:0007669"/>
    <property type="project" value="UniProtKB-KW"/>
</dbReference>
<dbReference type="GO" id="GO:0016887">
    <property type="term" value="F:ATP hydrolysis activity"/>
    <property type="evidence" value="ECO:0007669"/>
    <property type="project" value="RHEA"/>
</dbReference>
<dbReference type="GO" id="GO:0003677">
    <property type="term" value="F:DNA binding"/>
    <property type="evidence" value="ECO:0007669"/>
    <property type="project" value="UniProtKB-KW"/>
</dbReference>
<dbReference type="GO" id="GO:0004519">
    <property type="term" value="F:endonuclease activity"/>
    <property type="evidence" value="ECO:0007669"/>
    <property type="project" value="UniProtKB-KW"/>
</dbReference>
<dbReference type="GO" id="GO:0046872">
    <property type="term" value="F:metal ion binding"/>
    <property type="evidence" value="ECO:0007669"/>
    <property type="project" value="UniProtKB-KW"/>
</dbReference>
<dbReference type="GO" id="GO:0016779">
    <property type="term" value="F:nucleotidyltransferase activity"/>
    <property type="evidence" value="ECO:0007669"/>
    <property type="project" value="UniProtKB-KW"/>
</dbReference>
<dbReference type="GO" id="GO:0003723">
    <property type="term" value="F:RNA binding"/>
    <property type="evidence" value="ECO:0007669"/>
    <property type="project" value="InterPro"/>
</dbReference>
<dbReference type="GO" id="GO:0003724">
    <property type="term" value="F:RNA helicase activity"/>
    <property type="evidence" value="ECO:0007669"/>
    <property type="project" value="InterPro"/>
</dbReference>
<dbReference type="GO" id="GO:0006260">
    <property type="term" value="P:DNA replication"/>
    <property type="evidence" value="ECO:0007669"/>
    <property type="project" value="UniProtKB-KW"/>
</dbReference>
<dbReference type="Gene3D" id="3.40.1310.20">
    <property type="match status" value="1"/>
</dbReference>
<dbReference type="InterPro" id="IPR049912">
    <property type="entry name" value="CRESS_DNA_REP"/>
</dbReference>
<dbReference type="InterPro" id="IPR000605">
    <property type="entry name" value="Helicase_SF3_ssDNA/RNA_vir"/>
</dbReference>
<dbReference type="Pfam" id="PF00910">
    <property type="entry name" value="RNA_helicase"/>
    <property type="match status" value="1"/>
</dbReference>
<dbReference type="Pfam" id="PF02407">
    <property type="entry name" value="Viral_Rep"/>
    <property type="match status" value="1"/>
</dbReference>
<dbReference type="PROSITE" id="PS52020">
    <property type="entry name" value="CRESS_DNA_REP"/>
    <property type="match status" value="1"/>
</dbReference>
<reference key="1">
    <citation type="journal article" date="1998" name="J. Gen. Virol.">
        <title>Sequences of ten circular ssDNA components associated with the milk vetch dwarf virus genome.</title>
        <authorList>
            <person name="Sano Y."/>
            <person name="Wada M."/>
            <person name="Hashimoto Y."/>
            <person name="Matsumoto T."/>
            <person name="Kojima M."/>
        </authorList>
    </citation>
    <scope>NUCLEOTIDE SEQUENCE [GENOMIC DNA]</scope>
</reference>
<organism>
    <name type="scientific">Milk vetch dwarf C2 alphasatellite</name>
    <name type="common">MVDC2A</name>
    <dbReference type="NCBI Taxonomy" id="1455653"/>
    <lineage>
        <taxon>Viruses</taxon>
        <taxon>Viruses incertae sedis</taxon>
        <taxon>Alphasatellitidae</taxon>
        <taxon>Nanoalphasatellitinae</taxon>
    </lineage>
</organism>
<accession>Q9Z0D4</accession>
<feature type="chain" id="PRO_0000378522" description="Para-Rep C2">
    <location>
        <begin position="1"/>
        <end position="282"/>
    </location>
</feature>
<feature type="domain" description="CRESS-DNA virus Rep endonuclease" evidence="3">
    <location>
        <begin position="1"/>
        <end position="99"/>
    </location>
</feature>
<feature type="short sequence motif" description="RCR-1" evidence="3">
    <location>
        <begin position="7"/>
        <end position="10"/>
    </location>
</feature>
<feature type="short sequence motif" description="RCR-2" evidence="3">
    <location>
        <begin position="47"/>
        <end position="49"/>
    </location>
</feature>
<feature type="short sequence motif" description="Nuclear localization signal" evidence="2">
    <location>
        <begin position="56"/>
        <end position="77"/>
    </location>
</feature>
<feature type="short sequence motif" description="RCR-3" evidence="3">
    <location>
        <begin position="86"/>
        <end position="89"/>
    </location>
</feature>
<feature type="short sequence motif" description="Nuclear localization signal" evidence="2">
    <location>
        <begin position="99"/>
        <end position="105"/>
    </location>
</feature>
<feature type="active site" description="For DNA cleavage activity" evidence="3">
    <location>
        <position position="86"/>
    </location>
</feature>
<feature type="binding site" evidence="2">
    <location>
        <position position="38"/>
    </location>
    <ligand>
        <name>a divalent metal cation</name>
        <dbReference type="ChEBI" id="CHEBI:60240"/>
    </ligand>
</feature>
<feature type="binding site" evidence="2">
    <location>
        <position position="47"/>
    </location>
    <ligand>
        <name>a divalent metal cation</name>
        <dbReference type="ChEBI" id="CHEBI:60240"/>
    </ligand>
</feature>
<feature type="binding site" evidence="1">
    <location>
        <begin position="174"/>
        <end position="182"/>
    </location>
    <ligand>
        <name>ATP</name>
        <dbReference type="ChEBI" id="CHEBI:30616"/>
    </ligand>
</feature>
<gene>
    <name type="primary">C2</name>
</gene>
<comment type="function">
    <text evidence="1">Initiates and terminates the replication only of its own subviral DNA molecule. The closed circular ssDNA genome is first converted to a superhelical dsDNA. Rep binds a specific hairpin at the genome origin of replication. Introduces an endonucleolytic nick within the intergenic region of the genome, thereby initiating the rolling circle replication (RCR). Following cleavage, binds covalently to the 5'-phosphate of DNA as a tyrosyl ester. The cleavage gives rise to a free 3'-OH that serves as a primer for the cellular DNA polymerase. The polymerase synthesizes the (+) strand DNA by rolling circle mechanism. After one round of replication, a Rep-catalyzed nucleotidyl transfer reaction releases a circular single-stranded virus genome, thereby terminating the replication. Displays origin-specific DNA cleavage, nucleotidyl transferase, ATPase and helicase activities (By similarity).</text>
</comment>
<comment type="catalytic activity">
    <reaction>
        <text>ATP + H2O = ADP + phosphate + H(+)</text>
        <dbReference type="Rhea" id="RHEA:13065"/>
        <dbReference type="ChEBI" id="CHEBI:15377"/>
        <dbReference type="ChEBI" id="CHEBI:15378"/>
        <dbReference type="ChEBI" id="CHEBI:30616"/>
        <dbReference type="ChEBI" id="CHEBI:43474"/>
        <dbReference type="ChEBI" id="CHEBI:456216"/>
    </reaction>
</comment>
<comment type="cofactor">
    <cofactor evidence="1">
        <name>Mg(2+)</name>
        <dbReference type="ChEBI" id="CHEBI:18420"/>
    </cofactor>
    <cofactor evidence="1">
        <name>Mn(2+)</name>
        <dbReference type="ChEBI" id="CHEBI:29035"/>
    </cofactor>
    <text evidence="1">Divalent metal cations, possibly Mg(2+) or Mn(2+).</text>
</comment>
<comment type="subunit">
    <text evidence="1 4">Homooligomer (Potential). Rep binds to repeated DNA motifs (iterons) (By similarity).</text>
</comment>
<comment type="subcellular location">
    <subcellularLocation>
        <location evidence="4">Host nucleus</location>
    </subcellularLocation>
</comment>
<comment type="domain">
    <text>There are 3 rolling circle replication (RCR) motifs. RCR-2 is probably involved in metal coordination. RCR-3 is required for phosphodiester bond cleavage for initiation of RCR.</text>
</comment>
<comment type="miscellaneous">
    <text>The genome of nanoviruses is composed of six to eight segments. In addition, some isolates contain subviral DNAs.</text>
</comment>
<comment type="similarity">
    <text evidence="4">Belongs to the nanoviridea/circoviridae replication-associated protein family.</text>
</comment>
<comment type="caution">
    <text evidence="4">This protein is encoded by a subviral DNA that is not present in all isolates of the virus.</text>
</comment>
<keyword id="KW-0067">ATP-binding</keyword>
<keyword id="KW-0190">Covalent protein-DNA linkage</keyword>
<keyword id="KW-0235">DNA replication</keyword>
<keyword id="KW-0238">DNA-binding</keyword>
<keyword id="KW-0255">Endonuclease</keyword>
<keyword id="KW-0347">Helicase</keyword>
<keyword id="KW-1048">Host nucleus</keyword>
<keyword id="KW-0378">Hydrolase</keyword>
<keyword id="KW-0479">Metal-binding</keyword>
<keyword id="KW-0511">Multifunctional enzyme</keyword>
<keyword id="KW-0540">Nuclease</keyword>
<keyword id="KW-0547">Nucleotide-binding</keyword>
<keyword id="KW-0548">Nucleotidyltransferase</keyword>
<keyword id="KW-0808">Transferase</keyword>
<name>REP2_MVDC2</name>
<protein>
    <recommendedName>
        <fullName>Para-Rep C2</fullName>
        <shortName>Rep2</shortName>
        <ecNumber>2.7.7.-</ecNumber>
        <ecNumber>3.1.21.-</ecNumber>
        <ecNumber>3.6.1.-</ecNumber>
    </recommendedName>
    <alternativeName>
        <fullName>Replication-associated protein of non-essential DNA C2</fullName>
    </alternativeName>
</protein>
<evidence type="ECO:0000250" key="1"/>
<evidence type="ECO:0000255" key="2"/>
<evidence type="ECO:0000255" key="3">
    <source>
        <dbReference type="PROSITE-ProRule" id="PRU01364"/>
    </source>
</evidence>
<evidence type="ECO:0000305" key="4"/>